<feature type="chain" id="PRO_0000193706" description="Chitin synthase 1">
    <location>
        <begin position="1" status="less than"/>
        <end position="189" status="greater than"/>
    </location>
</feature>
<feature type="non-terminal residue">
    <location>
        <position position="1"/>
    </location>
</feature>
<feature type="non-terminal residue">
    <location>
        <position position="189"/>
    </location>
</feature>
<gene>
    <name type="primary">CHS1</name>
</gene>
<accession>P30590</accession>
<dbReference type="EC" id="2.4.1.16"/>
<dbReference type="EMBL" id="M82952">
    <property type="protein sequence ID" value="AAA33634.1"/>
    <property type="molecule type" value="Genomic_DNA"/>
</dbReference>
<dbReference type="PIR" id="F38192">
    <property type="entry name" value="F38192"/>
</dbReference>
<dbReference type="SMR" id="P30590"/>
<dbReference type="CAZy" id="GT2">
    <property type="family name" value="Glycosyltransferase Family 2"/>
</dbReference>
<dbReference type="GO" id="GO:0030428">
    <property type="term" value="C:cell septum"/>
    <property type="evidence" value="ECO:0007669"/>
    <property type="project" value="TreeGrafter"/>
</dbReference>
<dbReference type="GO" id="GO:0005886">
    <property type="term" value="C:plasma membrane"/>
    <property type="evidence" value="ECO:0007669"/>
    <property type="project" value="UniProtKB-SubCell"/>
</dbReference>
<dbReference type="GO" id="GO:0004100">
    <property type="term" value="F:chitin synthase activity"/>
    <property type="evidence" value="ECO:0007669"/>
    <property type="project" value="UniProtKB-EC"/>
</dbReference>
<dbReference type="GO" id="GO:0071555">
    <property type="term" value="P:cell wall organization"/>
    <property type="evidence" value="ECO:0007669"/>
    <property type="project" value="UniProtKB-KW"/>
</dbReference>
<dbReference type="GO" id="GO:0006031">
    <property type="term" value="P:chitin biosynthetic process"/>
    <property type="evidence" value="ECO:0007669"/>
    <property type="project" value="InterPro"/>
</dbReference>
<dbReference type="InterPro" id="IPR004835">
    <property type="entry name" value="Chitin_synth"/>
</dbReference>
<dbReference type="InterPro" id="IPR004834">
    <property type="entry name" value="Chitin_synth_fun"/>
</dbReference>
<dbReference type="PANTHER" id="PTHR22914">
    <property type="entry name" value="CHITIN SYNTHASE"/>
    <property type="match status" value="1"/>
</dbReference>
<dbReference type="PANTHER" id="PTHR22914:SF9">
    <property type="entry name" value="CHITIN SYNTHASE 1"/>
    <property type="match status" value="1"/>
</dbReference>
<dbReference type="Pfam" id="PF01644">
    <property type="entry name" value="Chitin_synth_1"/>
    <property type="match status" value="1"/>
</dbReference>
<comment type="function">
    <text evidence="1">Polymerizes chitin, a structural polymer of the cell wall and septum, by transferring the sugar moiety of UDP-GlcNAc to the non-reducing end of the growing chitin polymer.</text>
</comment>
<comment type="catalytic activity">
    <reaction>
        <text>[(1-&gt;4)-N-acetyl-beta-D-glucosaminyl](n) + UDP-N-acetyl-alpha-D-glucosamine = [(1-&gt;4)-N-acetyl-beta-D-glucosaminyl](n+1) + UDP + H(+)</text>
        <dbReference type="Rhea" id="RHEA:16637"/>
        <dbReference type="Rhea" id="RHEA-COMP:9593"/>
        <dbReference type="Rhea" id="RHEA-COMP:9595"/>
        <dbReference type="ChEBI" id="CHEBI:15378"/>
        <dbReference type="ChEBI" id="CHEBI:17029"/>
        <dbReference type="ChEBI" id="CHEBI:57705"/>
        <dbReference type="ChEBI" id="CHEBI:58223"/>
        <dbReference type="EC" id="2.4.1.16"/>
    </reaction>
</comment>
<comment type="subcellular location">
    <subcellularLocation>
        <location evidence="1">Cell membrane</location>
        <topology evidence="1">Multi-pass membrane protein</topology>
    </subcellularLocation>
</comment>
<comment type="similarity">
    <text evidence="1">Belongs to the chitin synthase family.</text>
</comment>
<protein>
    <recommendedName>
        <fullName>Chitin synthase 1</fullName>
        <ecNumber>2.4.1.16</ecNumber>
    </recommendedName>
    <alternativeName>
        <fullName>Chitin-UDP acetyl-glucosaminyl transferase 1</fullName>
    </alternativeName>
</protein>
<organism>
    <name type="scientific">Exophiala exophialae</name>
    <name type="common">Black yeast-like fungus</name>
    <name type="synonym">Phaeococcomyces exophialae</name>
    <dbReference type="NCBI Taxonomy" id="13202"/>
    <lineage>
        <taxon>Eukaryota</taxon>
        <taxon>Fungi</taxon>
        <taxon>Dikarya</taxon>
        <taxon>Ascomycota</taxon>
        <taxon>Pezizomycotina</taxon>
        <taxon>Eurotiomycetes</taxon>
        <taxon>Chaetothyriomycetidae</taxon>
        <taxon>Chaetothyriales</taxon>
        <taxon>Herpotrichiellaceae</taxon>
        <taxon>Exophiala</taxon>
    </lineage>
</organism>
<evidence type="ECO:0000305" key="1"/>
<sequence>EFLFARTMIGVFKNIEYMCNRTSSKTWGKEAWKKIVVCIVSDGRAKINTRTRAVLAGLGVYQDGIAKQQVNGKDVTAHIYEYTTQVGLELKGTQVSLKPRSATPVQLLFCLKEKNQKKINSHRWFFQAFGRVLDPNICVLIDAGTKPGKDSIYQLWKAFDLEPMCGGACGEIKVMLDHGKKLYNPLIAT</sequence>
<name>CHS1_EXOEX</name>
<proteinExistence type="inferred from homology"/>
<keyword id="KW-1003">Cell membrane</keyword>
<keyword id="KW-0961">Cell wall biogenesis/degradation</keyword>
<keyword id="KW-0328">Glycosyltransferase</keyword>
<keyword id="KW-0472">Membrane</keyword>
<keyword id="KW-0808">Transferase</keyword>
<keyword id="KW-0812">Transmembrane</keyword>
<reference key="1">
    <citation type="journal article" date="1992" name="Proc. Natl. Acad. Sci. U.S.A.">
        <title>Classification of fungal chitin synthases.</title>
        <authorList>
            <person name="Bowen A.R."/>
            <person name="Chen-Wu J.L.-P."/>
            <person name="Momany M."/>
            <person name="Young R."/>
            <person name="Szaniszlo P.J."/>
            <person name="Robbins P.W."/>
        </authorList>
    </citation>
    <scope>NUCLEOTIDE SEQUENCE [GENOMIC DNA]</scope>
</reference>